<protein>
    <recommendedName>
        <fullName evidence="1">GTPase Obg</fullName>
        <ecNumber evidence="1">3.6.5.-</ecNumber>
    </recommendedName>
    <alternativeName>
        <fullName evidence="1">GTP-binding protein Obg</fullName>
    </alternativeName>
</protein>
<reference key="1">
    <citation type="journal article" date="2008" name="Proc. Natl. Acad. Sci. U.S.A.">
        <title>Nitrogen fixation island and rhizosphere competence traits in the genome of root-associated Pseudomonas stutzeri A1501.</title>
        <authorList>
            <person name="Yan Y."/>
            <person name="Yang J."/>
            <person name="Dou Y."/>
            <person name="Chen M."/>
            <person name="Ping S."/>
            <person name="Peng J."/>
            <person name="Lu W."/>
            <person name="Zhang W."/>
            <person name="Yao Z."/>
            <person name="Li H."/>
            <person name="Liu W."/>
            <person name="He S."/>
            <person name="Geng L."/>
            <person name="Zhang X."/>
            <person name="Yang F."/>
            <person name="Yu H."/>
            <person name="Zhan Y."/>
            <person name="Li D."/>
            <person name="Lin Z."/>
            <person name="Wang Y."/>
            <person name="Elmerich C."/>
            <person name="Lin M."/>
            <person name="Jin Q."/>
        </authorList>
    </citation>
    <scope>NUCLEOTIDE SEQUENCE [LARGE SCALE GENOMIC DNA]</scope>
    <source>
        <strain>A1501</strain>
    </source>
</reference>
<dbReference type="EC" id="3.6.5.-" evidence="1"/>
<dbReference type="EMBL" id="CP000304">
    <property type="protein sequence ID" value="ABP78655.1"/>
    <property type="molecule type" value="Genomic_DNA"/>
</dbReference>
<dbReference type="RefSeq" id="WP_011912147.1">
    <property type="nucleotide sequence ID" value="NC_009434.1"/>
</dbReference>
<dbReference type="SMR" id="A4VI54"/>
<dbReference type="KEGG" id="psa:PST_0958"/>
<dbReference type="eggNOG" id="COG0536">
    <property type="taxonomic scope" value="Bacteria"/>
</dbReference>
<dbReference type="HOGENOM" id="CLU_011747_2_0_6"/>
<dbReference type="Proteomes" id="UP000000233">
    <property type="component" value="Chromosome"/>
</dbReference>
<dbReference type="GO" id="GO:0005737">
    <property type="term" value="C:cytoplasm"/>
    <property type="evidence" value="ECO:0007669"/>
    <property type="project" value="UniProtKB-SubCell"/>
</dbReference>
<dbReference type="GO" id="GO:0005525">
    <property type="term" value="F:GTP binding"/>
    <property type="evidence" value="ECO:0007669"/>
    <property type="project" value="UniProtKB-UniRule"/>
</dbReference>
<dbReference type="GO" id="GO:0003924">
    <property type="term" value="F:GTPase activity"/>
    <property type="evidence" value="ECO:0007669"/>
    <property type="project" value="UniProtKB-UniRule"/>
</dbReference>
<dbReference type="GO" id="GO:0000287">
    <property type="term" value="F:magnesium ion binding"/>
    <property type="evidence" value="ECO:0007669"/>
    <property type="project" value="InterPro"/>
</dbReference>
<dbReference type="GO" id="GO:0042254">
    <property type="term" value="P:ribosome biogenesis"/>
    <property type="evidence" value="ECO:0007669"/>
    <property type="project" value="UniProtKB-UniRule"/>
</dbReference>
<dbReference type="CDD" id="cd01898">
    <property type="entry name" value="Obg"/>
    <property type="match status" value="1"/>
</dbReference>
<dbReference type="FunFam" id="2.70.210.12:FF:000001">
    <property type="entry name" value="GTPase Obg"/>
    <property type="match status" value="1"/>
</dbReference>
<dbReference type="FunFam" id="3.40.50.300:FF:000185">
    <property type="entry name" value="GTPase Obg"/>
    <property type="match status" value="1"/>
</dbReference>
<dbReference type="Gene3D" id="2.70.210.12">
    <property type="entry name" value="GTP1/OBG domain"/>
    <property type="match status" value="1"/>
</dbReference>
<dbReference type="Gene3D" id="3.40.50.300">
    <property type="entry name" value="P-loop containing nucleotide triphosphate hydrolases"/>
    <property type="match status" value="1"/>
</dbReference>
<dbReference type="HAMAP" id="MF_01454">
    <property type="entry name" value="GTPase_Obg"/>
    <property type="match status" value="1"/>
</dbReference>
<dbReference type="InterPro" id="IPR031167">
    <property type="entry name" value="G_OBG"/>
</dbReference>
<dbReference type="InterPro" id="IPR006073">
    <property type="entry name" value="GTP-bd"/>
</dbReference>
<dbReference type="InterPro" id="IPR014100">
    <property type="entry name" value="GTP-bd_Obg/CgtA"/>
</dbReference>
<dbReference type="InterPro" id="IPR006074">
    <property type="entry name" value="GTP1-OBG_CS"/>
</dbReference>
<dbReference type="InterPro" id="IPR006169">
    <property type="entry name" value="GTP1_OBG_dom"/>
</dbReference>
<dbReference type="InterPro" id="IPR036726">
    <property type="entry name" value="GTP1_OBG_dom_sf"/>
</dbReference>
<dbReference type="InterPro" id="IPR045086">
    <property type="entry name" value="OBG_GTPase"/>
</dbReference>
<dbReference type="InterPro" id="IPR027417">
    <property type="entry name" value="P-loop_NTPase"/>
</dbReference>
<dbReference type="NCBIfam" id="TIGR02729">
    <property type="entry name" value="Obg_CgtA"/>
    <property type="match status" value="1"/>
</dbReference>
<dbReference type="NCBIfam" id="NF008955">
    <property type="entry name" value="PRK12297.1"/>
    <property type="match status" value="1"/>
</dbReference>
<dbReference type="NCBIfam" id="NF008956">
    <property type="entry name" value="PRK12299.1"/>
    <property type="match status" value="1"/>
</dbReference>
<dbReference type="PANTHER" id="PTHR11702">
    <property type="entry name" value="DEVELOPMENTALLY REGULATED GTP-BINDING PROTEIN-RELATED"/>
    <property type="match status" value="1"/>
</dbReference>
<dbReference type="PANTHER" id="PTHR11702:SF31">
    <property type="entry name" value="MITOCHONDRIAL RIBOSOME-ASSOCIATED GTPASE 2"/>
    <property type="match status" value="1"/>
</dbReference>
<dbReference type="Pfam" id="PF01018">
    <property type="entry name" value="GTP1_OBG"/>
    <property type="match status" value="1"/>
</dbReference>
<dbReference type="Pfam" id="PF01926">
    <property type="entry name" value="MMR_HSR1"/>
    <property type="match status" value="1"/>
</dbReference>
<dbReference type="PIRSF" id="PIRSF002401">
    <property type="entry name" value="GTP_bd_Obg/CgtA"/>
    <property type="match status" value="1"/>
</dbReference>
<dbReference type="PRINTS" id="PR00326">
    <property type="entry name" value="GTP1OBG"/>
</dbReference>
<dbReference type="SUPFAM" id="SSF82051">
    <property type="entry name" value="Obg GTP-binding protein N-terminal domain"/>
    <property type="match status" value="1"/>
</dbReference>
<dbReference type="SUPFAM" id="SSF52540">
    <property type="entry name" value="P-loop containing nucleoside triphosphate hydrolases"/>
    <property type="match status" value="1"/>
</dbReference>
<dbReference type="PROSITE" id="PS51710">
    <property type="entry name" value="G_OBG"/>
    <property type="match status" value="1"/>
</dbReference>
<dbReference type="PROSITE" id="PS00905">
    <property type="entry name" value="GTP1_OBG"/>
    <property type="match status" value="1"/>
</dbReference>
<dbReference type="PROSITE" id="PS51883">
    <property type="entry name" value="OBG"/>
    <property type="match status" value="1"/>
</dbReference>
<accession>A4VI54</accession>
<evidence type="ECO:0000255" key="1">
    <source>
        <dbReference type="HAMAP-Rule" id="MF_01454"/>
    </source>
</evidence>
<evidence type="ECO:0000255" key="2">
    <source>
        <dbReference type="PROSITE-ProRule" id="PRU01231"/>
    </source>
</evidence>
<evidence type="ECO:0000256" key="3">
    <source>
        <dbReference type="SAM" id="MobiDB-lite"/>
    </source>
</evidence>
<gene>
    <name evidence="1" type="primary">obg</name>
    <name type="ordered locus">PST_0958</name>
</gene>
<organism>
    <name type="scientific">Stutzerimonas stutzeri (strain A1501)</name>
    <name type="common">Pseudomonas stutzeri</name>
    <dbReference type="NCBI Taxonomy" id="379731"/>
    <lineage>
        <taxon>Bacteria</taxon>
        <taxon>Pseudomonadati</taxon>
        <taxon>Pseudomonadota</taxon>
        <taxon>Gammaproteobacteria</taxon>
        <taxon>Pseudomonadales</taxon>
        <taxon>Pseudomonadaceae</taxon>
        <taxon>Stutzerimonas</taxon>
    </lineage>
</organism>
<feature type="chain" id="PRO_0000386162" description="GTPase Obg">
    <location>
        <begin position="1"/>
        <end position="405"/>
    </location>
</feature>
<feature type="domain" description="Obg" evidence="2">
    <location>
        <begin position="1"/>
        <end position="159"/>
    </location>
</feature>
<feature type="domain" description="OBG-type G" evidence="1">
    <location>
        <begin position="160"/>
        <end position="333"/>
    </location>
</feature>
<feature type="region of interest" description="Disordered" evidence="3">
    <location>
        <begin position="127"/>
        <end position="148"/>
    </location>
</feature>
<feature type="region of interest" description="Disordered" evidence="3">
    <location>
        <begin position="373"/>
        <end position="405"/>
    </location>
</feature>
<feature type="compositionally biased region" description="Polar residues" evidence="3">
    <location>
        <begin position="129"/>
        <end position="143"/>
    </location>
</feature>
<feature type="compositionally biased region" description="Acidic residues" evidence="3">
    <location>
        <begin position="383"/>
        <end position="398"/>
    </location>
</feature>
<feature type="binding site" evidence="1">
    <location>
        <begin position="166"/>
        <end position="173"/>
    </location>
    <ligand>
        <name>GTP</name>
        <dbReference type="ChEBI" id="CHEBI:37565"/>
    </ligand>
</feature>
<feature type="binding site" evidence="1">
    <location>
        <position position="173"/>
    </location>
    <ligand>
        <name>Mg(2+)</name>
        <dbReference type="ChEBI" id="CHEBI:18420"/>
    </ligand>
</feature>
<feature type="binding site" evidence="1">
    <location>
        <begin position="191"/>
        <end position="195"/>
    </location>
    <ligand>
        <name>GTP</name>
        <dbReference type="ChEBI" id="CHEBI:37565"/>
    </ligand>
</feature>
<feature type="binding site" evidence="1">
    <location>
        <position position="193"/>
    </location>
    <ligand>
        <name>Mg(2+)</name>
        <dbReference type="ChEBI" id="CHEBI:18420"/>
    </ligand>
</feature>
<feature type="binding site" evidence="1">
    <location>
        <begin position="213"/>
        <end position="216"/>
    </location>
    <ligand>
        <name>GTP</name>
        <dbReference type="ChEBI" id="CHEBI:37565"/>
    </ligand>
</feature>
<feature type="binding site" evidence="1">
    <location>
        <begin position="283"/>
        <end position="286"/>
    </location>
    <ligand>
        <name>GTP</name>
        <dbReference type="ChEBI" id="CHEBI:37565"/>
    </ligand>
</feature>
<feature type="binding site" evidence="1">
    <location>
        <begin position="314"/>
        <end position="316"/>
    </location>
    <ligand>
        <name>GTP</name>
        <dbReference type="ChEBI" id="CHEBI:37565"/>
    </ligand>
</feature>
<keyword id="KW-0963">Cytoplasm</keyword>
<keyword id="KW-0342">GTP-binding</keyword>
<keyword id="KW-0378">Hydrolase</keyword>
<keyword id="KW-0460">Magnesium</keyword>
<keyword id="KW-0479">Metal-binding</keyword>
<keyword id="KW-0547">Nucleotide-binding</keyword>
<keyword id="KW-1185">Reference proteome</keyword>
<comment type="function">
    <text evidence="1">An essential GTPase which binds GTP, GDP and possibly (p)ppGpp with moderate affinity, with high nucleotide exchange rates and a fairly low GTP hydrolysis rate. Plays a role in control of the cell cycle, stress response, ribosome biogenesis and in those bacteria that undergo differentiation, in morphogenesis control.</text>
</comment>
<comment type="cofactor">
    <cofactor evidence="1">
        <name>Mg(2+)</name>
        <dbReference type="ChEBI" id="CHEBI:18420"/>
    </cofactor>
</comment>
<comment type="subunit">
    <text evidence="1">Monomer.</text>
</comment>
<comment type="subcellular location">
    <subcellularLocation>
        <location evidence="1">Cytoplasm</location>
    </subcellularLocation>
</comment>
<comment type="similarity">
    <text evidence="1">Belongs to the TRAFAC class OBG-HflX-like GTPase superfamily. OBG GTPase family.</text>
</comment>
<name>OBG_STUS1</name>
<sequence>MKFVDEVSIFVKAGDGGNGMMSFRREKFIEKGGPNGGDGGDGGSVYLEADENLNTLVDYRYTRRFQAQNGQKGGSTDCTGAKGEDLILPVPVGTTVIDAATQEIMGDLTKAGQRLLVAQGGWHGLGNTRFKSSTNRAPRQTTPGKPGDARDLKLELKVLADVGLLGLPNAGKSTFIRSVSAAKPKVADYPFTTLVPNLGVVSVGRYKSFVIADIPGLIEGASEGAGLGIRFLKHLARTRLLLHLVDMAPLDGSDPADAAEVILHELEKFSPALTQRDRWLVLNKADQLLEEEREERVRHVVERLDWKGPVFVISALESEGTEALSQAIMRYLDERAVRIAEEPEYAEALAELDRQIEDEARARLQELDDQRALRRAGVKSVEEADDDDFDDDDDDEGGAEIIYVR</sequence>
<proteinExistence type="inferred from homology"/>